<sequence length="329" mass="36894">MPISTKSSFYLPAVDISPYLQDPNSDAARKVIDDVRAACTSTGFFQLLGHGISPALQQSVFAAAAKFFALPSDVKSRCRNVGFRGYDPMASQSYELGVLPDLKEGFIAGKDIPLDDPRVASQRFFMGQNAWPPSELLPEANFRRPIEEYYQAMLKLCWVVLDLVAATLPYGPHVFDEFKENDPACPLRLLHYPPAPAPDVAKGRQLGSSAHTDFGAITLLLQDDHSGLEVQDCETGEWIGVPPNKDAYVVNLGDMMSRITRGHYKSSIHRVINQNLTDRYSVVFFFDGNLDYRLRPLDRVGQNWDEEDTLTVEEHMLERTTTTYNLKVK</sequence>
<reference key="1">
    <citation type="journal article" date="2016" name="Chem. Sci.">
        <title>The molecular steps of citrinin biosynthesis in fungi.</title>
        <authorList>
            <person name="He Y."/>
            <person name="Cox R.J."/>
        </authorList>
    </citation>
    <scope>NUCLEOTIDE SEQUENCE [GENOMIC DNA]</scope>
    <scope>FUNCTION</scope>
    <scope>DISRUPTION PHENOTYPE</scope>
    <scope>CATALYTIC ACTIVITY</scope>
    <scope>PATHWAY</scope>
    <source>
        <strain>M7</strain>
    </source>
</reference>
<reference key="2">
    <citation type="journal article" date="2016" name="J. Agric. Food Chem.">
        <title>Effects of light intensity and color on the biomass, extracellular red pigment, and citrinin production of Monascus ruber.</title>
        <authorList>
            <person name="Wang L."/>
            <person name="Dai Y."/>
            <person name="Chen W."/>
            <person name="Shao Y."/>
            <person name="Chen F."/>
        </authorList>
    </citation>
    <scope>INDUCTION</scope>
    <source>
        <strain>M7</strain>
    </source>
</reference>
<reference key="3">
    <citation type="journal article" date="2017" name="Chem. Commun. (Camb.)">
        <title>In trans hydrolysis of carrier protein-bound acyl intermediates by CitA during citrinin biosynthesis.</title>
        <authorList>
            <person name="Storm P.A."/>
            <person name="Townsend C.A."/>
        </authorList>
    </citation>
    <scope>FUNCTION</scope>
</reference>
<comment type="function">
    <text evidence="3 4">Non-reducing polyketide synthase; part of the gene cluster that mediates the biosynthesis of the mycotoxin citrinin, a hepato-nephrotoxic compound to humans due to inhibition of respiration complex III (Ref.1). The pathway begins with the synthesis of a keto-aldehyde intermediate by the citrinin PKS (pksCT also named citS) from successive condensations of 4 malonyl-CoA units, presumably with a simple acetyl-CoA starter unit (Ref.1). Release of the keto-aldehyde intermediate is consistent with the presence of the C-terminal reductive release domain (Ref.1). CitA collaborates with citS by catalyzing the hydrolysis of ACP-bound acyl intermediates to free the ACP from stalled intermediates (PubMed:29189834). CitB then catalyzes the oxidation of the C-12 methyl of the ketone intermediate to an alcohol intermediate which is further oxidized by the oxidoreductase citC to produce a bisaldehyde intermediate (Ref.1). The fourth catalytic step is catalyzed by the citD aldehyde dehydrogenase (Ref.1). The final transformation is the reduction of C-3 by citE to provide the chemically stable citrinin nucleus (Ref.1). CitE appears highly selective for its substrate as its presence in any context other than a full complement of citS and citA-D does not result in observable new compounds (Ref.1).</text>
</comment>
<comment type="cofactor">
    <cofactor evidence="1">
        <name>Fe(2+)</name>
        <dbReference type="ChEBI" id="CHEBI:29033"/>
    </cofactor>
    <text evidence="1">Binds 1 Fe(2+) ion per subunit.</text>
</comment>
<comment type="pathway">
    <text evidence="4">Mycotoxin biosynthesis.</text>
</comment>
<comment type="induction">
    <text evidence="2">Expression is stimulated under green light conditions (PubMed:27998068).</text>
</comment>
<comment type="disruption phenotype">
    <text evidence="4">Leads to complete absence of citrinin production and the accumulation of a keto-aldehyde intermediate at the same retention time which is distinguishable by its UV and mass spectra (Ref.1).</text>
</comment>
<comment type="similarity">
    <text evidence="6">Belongs to the iron/ascorbate-dependent oxidoreductase family.</text>
</comment>
<name>CITB_MONRU</name>
<dbReference type="EC" id="1.14.-.-" evidence="4"/>
<dbReference type="EMBL" id="KT781075">
    <property type="protein sequence ID" value="ALI92653.1"/>
    <property type="molecule type" value="Genomic_DNA"/>
</dbReference>
<dbReference type="SMR" id="A0A159BP93"/>
<dbReference type="GO" id="GO:0051213">
    <property type="term" value="F:dioxygenase activity"/>
    <property type="evidence" value="ECO:0007669"/>
    <property type="project" value="UniProtKB-KW"/>
</dbReference>
<dbReference type="GO" id="GO:0046872">
    <property type="term" value="F:metal ion binding"/>
    <property type="evidence" value="ECO:0007669"/>
    <property type="project" value="UniProtKB-KW"/>
</dbReference>
<dbReference type="GO" id="GO:0044283">
    <property type="term" value="P:small molecule biosynthetic process"/>
    <property type="evidence" value="ECO:0007669"/>
    <property type="project" value="UniProtKB-ARBA"/>
</dbReference>
<dbReference type="Gene3D" id="2.60.120.330">
    <property type="entry name" value="B-lactam Antibiotic, Isopenicillin N Synthase, Chain"/>
    <property type="match status" value="1"/>
</dbReference>
<dbReference type="InterPro" id="IPR026992">
    <property type="entry name" value="DIOX_N"/>
</dbReference>
<dbReference type="InterPro" id="IPR044861">
    <property type="entry name" value="IPNS-like_FE2OG_OXY"/>
</dbReference>
<dbReference type="InterPro" id="IPR027443">
    <property type="entry name" value="IPNS-like_sf"/>
</dbReference>
<dbReference type="InterPro" id="IPR050231">
    <property type="entry name" value="Iron_ascorbate_oxido_reductase"/>
</dbReference>
<dbReference type="InterPro" id="IPR005123">
    <property type="entry name" value="Oxoglu/Fe-dep_dioxygenase_dom"/>
</dbReference>
<dbReference type="PANTHER" id="PTHR47990">
    <property type="entry name" value="2-OXOGLUTARATE (2OG) AND FE(II)-DEPENDENT OXYGENASE SUPERFAMILY PROTEIN-RELATED"/>
    <property type="match status" value="1"/>
</dbReference>
<dbReference type="Pfam" id="PF03171">
    <property type="entry name" value="2OG-FeII_Oxy"/>
    <property type="match status" value="1"/>
</dbReference>
<dbReference type="Pfam" id="PF14226">
    <property type="entry name" value="DIOX_N"/>
    <property type="match status" value="1"/>
</dbReference>
<dbReference type="PRINTS" id="PR00682">
    <property type="entry name" value="IPNSYNTHASE"/>
</dbReference>
<dbReference type="SUPFAM" id="SSF51197">
    <property type="entry name" value="Clavaminate synthase-like"/>
    <property type="match status" value="1"/>
</dbReference>
<dbReference type="PROSITE" id="PS51471">
    <property type="entry name" value="FE2OG_OXY"/>
    <property type="match status" value="1"/>
</dbReference>
<accession>A0A159BP93</accession>
<gene>
    <name evidence="5" type="primary">citB</name>
    <name evidence="5" type="synonym">mrl2</name>
</gene>
<protein>
    <recommendedName>
        <fullName evidence="5">2-oxoglutarate-dependent dioxygenase citB</fullName>
        <ecNumber evidence="4">1.14.-.-</ecNumber>
    </recommendedName>
    <alternativeName>
        <fullName evidence="5">Citrinin synthesis protein B</fullName>
    </alternativeName>
</protein>
<evidence type="ECO:0000255" key="1">
    <source>
        <dbReference type="PROSITE-ProRule" id="PRU00805"/>
    </source>
</evidence>
<evidence type="ECO:0000269" key="2">
    <source>
    </source>
</evidence>
<evidence type="ECO:0000269" key="3">
    <source>
    </source>
</evidence>
<evidence type="ECO:0000269" key="4">
    <source ref="1"/>
</evidence>
<evidence type="ECO:0000303" key="5">
    <source ref="1"/>
</evidence>
<evidence type="ECO:0000305" key="6"/>
<organism>
    <name type="scientific">Monascus ruber</name>
    <name type="common">Mold</name>
    <dbReference type="NCBI Taxonomy" id="89489"/>
    <lineage>
        <taxon>Eukaryota</taxon>
        <taxon>Fungi</taxon>
        <taxon>Dikarya</taxon>
        <taxon>Ascomycota</taxon>
        <taxon>Pezizomycotina</taxon>
        <taxon>Eurotiomycetes</taxon>
        <taxon>Eurotiomycetidae</taxon>
        <taxon>Eurotiales</taxon>
        <taxon>Aspergillaceae</taxon>
        <taxon>Monascus</taxon>
    </lineage>
</organism>
<keyword id="KW-0223">Dioxygenase</keyword>
<keyword id="KW-0408">Iron</keyword>
<keyword id="KW-0479">Metal-binding</keyword>
<keyword id="KW-0560">Oxidoreductase</keyword>
<feature type="chain" id="PRO_0000440317" description="2-oxoglutarate-dependent dioxygenase citB">
    <location>
        <begin position="1"/>
        <end position="329"/>
    </location>
</feature>
<feature type="domain" description="Fe2OG dioxygenase" evidence="1">
    <location>
        <begin position="183"/>
        <end position="288"/>
    </location>
</feature>
<feature type="binding site" evidence="1">
    <location>
        <position position="211"/>
    </location>
    <ligand>
        <name>Fe cation</name>
        <dbReference type="ChEBI" id="CHEBI:24875"/>
    </ligand>
</feature>
<feature type="binding site" evidence="1">
    <location>
        <position position="213"/>
    </location>
    <ligand>
        <name>Fe cation</name>
        <dbReference type="ChEBI" id="CHEBI:24875"/>
    </ligand>
</feature>
<feature type="binding site" evidence="1">
    <location>
        <position position="269"/>
    </location>
    <ligand>
        <name>Fe cation</name>
        <dbReference type="ChEBI" id="CHEBI:24875"/>
    </ligand>
</feature>
<feature type="binding site" evidence="1">
    <location>
        <position position="279"/>
    </location>
    <ligand>
        <name>2-oxoglutarate</name>
        <dbReference type="ChEBI" id="CHEBI:16810"/>
    </ligand>
</feature>
<proteinExistence type="evidence at protein level"/>